<accession>Q5JDW8</accession>
<gene>
    <name evidence="1" type="primary">cpgS</name>
    <name type="ordered locus">TK1039</name>
</gene>
<name>CPGS_THEKO</name>
<comment type="function">
    <text evidence="1">Catalyzes the formation of cyclic 2,3-diphosphoglycerate (cDPG) by formation of an intramolecular phosphoanhydride bond at the expense of ATP.</text>
</comment>
<comment type="catalytic activity">
    <reaction evidence="1">
        <text>(2R)-2,3-bisphosphoglycerate + ATP + H(+) = cyclic (2R)-2,3-bisphosphoglycerate + ADP + phosphate</text>
        <dbReference type="Rhea" id="RHEA:42412"/>
        <dbReference type="ChEBI" id="CHEBI:15378"/>
        <dbReference type="ChEBI" id="CHEBI:30616"/>
        <dbReference type="ChEBI" id="CHEBI:43474"/>
        <dbReference type="ChEBI" id="CHEBI:58248"/>
        <dbReference type="ChEBI" id="CHEBI:79081"/>
        <dbReference type="ChEBI" id="CHEBI:456216"/>
        <dbReference type="EC" id="6.5.1.9"/>
    </reaction>
</comment>
<comment type="subcellular location">
    <subcellularLocation>
        <location evidence="1">Cytoplasm</location>
    </subcellularLocation>
</comment>
<comment type="similarity">
    <text evidence="1">Belongs to the cyclic 2,3-diphosphoglycerate synthetase family.</text>
</comment>
<reference key="1">
    <citation type="journal article" date="2005" name="Genome Res.">
        <title>Complete genome sequence of the hyperthermophilic archaeon Thermococcus kodakaraensis KOD1 and comparison with Pyrococcus genomes.</title>
        <authorList>
            <person name="Fukui T."/>
            <person name="Atomi H."/>
            <person name="Kanai T."/>
            <person name="Matsumi R."/>
            <person name="Fujiwara S."/>
            <person name="Imanaka T."/>
        </authorList>
    </citation>
    <scope>NUCLEOTIDE SEQUENCE [LARGE SCALE GENOMIC DNA]</scope>
    <source>
        <strain>ATCC BAA-918 / JCM 12380 / KOD1</strain>
    </source>
</reference>
<feature type="chain" id="PRO_0000313697" description="Cyclic 2,3-diphosphoglycerate synthetase">
    <location>
        <begin position="1"/>
        <end position="432"/>
    </location>
</feature>
<proteinExistence type="inferred from homology"/>
<organism>
    <name type="scientific">Thermococcus kodakarensis (strain ATCC BAA-918 / JCM 12380 / KOD1)</name>
    <name type="common">Pyrococcus kodakaraensis (strain KOD1)</name>
    <dbReference type="NCBI Taxonomy" id="69014"/>
    <lineage>
        <taxon>Archaea</taxon>
        <taxon>Methanobacteriati</taxon>
        <taxon>Methanobacteriota</taxon>
        <taxon>Thermococci</taxon>
        <taxon>Thermococcales</taxon>
        <taxon>Thermococcaceae</taxon>
        <taxon>Thermococcus</taxon>
    </lineage>
</organism>
<protein>
    <recommendedName>
        <fullName evidence="1">Cyclic 2,3-diphosphoglycerate synthetase</fullName>
        <shortName evidence="1">cDPGS</shortName>
        <ecNumber evidence="1">6.5.1.9</ecNumber>
    </recommendedName>
</protein>
<evidence type="ECO:0000255" key="1">
    <source>
        <dbReference type="HAMAP-Rule" id="MF_01908"/>
    </source>
</evidence>
<sequence>MRVVLIDGEHYPDVTKWAIHKLGDVCCAVFLGGTEKIGSLKALEDKIGVPLYHSPNYLDALKRAVLENDVEEVVDLSDEPVLTYEDRFRIASLCMLLGVTYRGADFTFTPKPLKKTKKPSISIIGTGKRVGKTAVSGFVARTLKEVARPVVVTMGRGGPEEPELIEGEKIELTPQFLLKVAKEGKHAASDHFEDALTSRVTTIGCRRCGGGMAGFPFFDVVDKGVELAESLPHDLIILEGSGATFPAYRTDAYILIIGGRQKTDFLRGYFGPFRIALADLIIVTMSDEINPEKRAEIRKIVEEINPKADLHFTAFRPRPLGNISGKKLGLVMTSQSALPKAKEHLEGLGAEVVATSGNLSNRPKLREDLEKFRGIDAVAVELKAAAVDVVTKWALERGIEVIYLDNEPVNIDGKDLRKSVLELGKRVLGRRA</sequence>
<dbReference type="EC" id="6.5.1.9" evidence="1"/>
<dbReference type="EMBL" id="AP006878">
    <property type="protein sequence ID" value="BAD85228.1"/>
    <property type="molecule type" value="Genomic_DNA"/>
</dbReference>
<dbReference type="RefSeq" id="WP_011249990.1">
    <property type="nucleotide sequence ID" value="NC_006624.1"/>
</dbReference>
<dbReference type="SMR" id="Q5JDW8"/>
<dbReference type="STRING" id="69014.TK1039"/>
<dbReference type="EnsemblBacteria" id="BAD85228">
    <property type="protein sequence ID" value="BAD85228"/>
    <property type="gene ID" value="TK1039"/>
</dbReference>
<dbReference type="GeneID" id="78447552"/>
<dbReference type="KEGG" id="tko:TK1039"/>
<dbReference type="PATRIC" id="fig|69014.16.peg.1016"/>
<dbReference type="eggNOG" id="arCOG01230">
    <property type="taxonomic scope" value="Archaea"/>
</dbReference>
<dbReference type="HOGENOM" id="CLU_638764_0_0_2"/>
<dbReference type="InParanoid" id="Q5JDW8"/>
<dbReference type="OrthoDB" id="85545at2157"/>
<dbReference type="PhylomeDB" id="Q5JDW8"/>
<dbReference type="Proteomes" id="UP000000536">
    <property type="component" value="Chromosome"/>
</dbReference>
<dbReference type="GO" id="GO:0005737">
    <property type="term" value="C:cytoplasm"/>
    <property type="evidence" value="ECO:0007669"/>
    <property type="project" value="UniProtKB-SubCell"/>
</dbReference>
<dbReference type="GO" id="GO:0005524">
    <property type="term" value="F:ATP binding"/>
    <property type="evidence" value="ECO:0007669"/>
    <property type="project" value="UniProtKB-KW"/>
</dbReference>
<dbReference type="GO" id="GO:0036356">
    <property type="term" value="F:cyclic 2,3-diphosphoglycerate synthetase activity"/>
    <property type="evidence" value="ECO:0007669"/>
    <property type="project" value="InterPro"/>
</dbReference>
<dbReference type="GO" id="GO:0016874">
    <property type="term" value="F:ligase activity"/>
    <property type="evidence" value="ECO:0007669"/>
    <property type="project" value="UniProtKB-UniRule"/>
</dbReference>
<dbReference type="GO" id="GO:0006094">
    <property type="term" value="P:gluconeogenesis"/>
    <property type="evidence" value="ECO:0007669"/>
    <property type="project" value="InterPro"/>
</dbReference>
<dbReference type="HAMAP" id="MF_01908">
    <property type="entry name" value="Cyc_PG_syn"/>
    <property type="match status" value="1"/>
</dbReference>
<dbReference type="InterPro" id="IPR016557">
    <property type="entry name" value="Cyc_diphosphoglycerate_synth"/>
</dbReference>
<dbReference type="PIRSF" id="PIRSF009445">
    <property type="entry name" value="Cyc_PG_syn"/>
    <property type="match status" value="1"/>
</dbReference>
<keyword id="KW-0067">ATP-binding</keyword>
<keyword id="KW-0963">Cytoplasm</keyword>
<keyword id="KW-0436">Ligase</keyword>
<keyword id="KW-0547">Nucleotide-binding</keyword>
<keyword id="KW-1185">Reference proteome</keyword>